<gene>
    <name evidence="1" type="primary">rpoZ</name>
    <name type="ordered locus">SAV1210</name>
</gene>
<comment type="function">
    <text evidence="1">Promotes RNA polymerase assembly. Latches the N- and C-terminal regions of the beta' subunit thereby facilitating its interaction with the beta and alpha subunits.</text>
</comment>
<comment type="catalytic activity">
    <reaction evidence="1">
        <text>RNA(n) + a ribonucleoside 5'-triphosphate = RNA(n+1) + diphosphate</text>
        <dbReference type="Rhea" id="RHEA:21248"/>
        <dbReference type="Rhea" id="RHEA-COMP:14527"/>
        <dbReference type="Rhea" id="RHEA-COMP:17342"/>
        <dbReference type="ChEBI" id="CHEBI:33019"/>
        <dbReference type="ChEBI" id="CHEBI:61557"/>
        <dbReference type="ChEBI" id="CHEBI:140395"/>
        <dbReference type="EC" id="2.7.7.6"/>
    </reaction>
</comment>
<comment type="subunit">
    <text evidence="1">The RNAP catalytic core consists of 2 alpha, 1 beta, 1 beta' and 1 omega subunit. When a sigma factor is associated with the core the holoenzyme is formed, which can initiate transcription.</text>
</comment>
<comment type="similarity">
    <text evidence="1">Belongs to the RNA polymerase subunit omega family.</text>
</comment>
<evidence type="ECO:0000255" key="1">
    <source>
        <dbReference type="HAMAP-Rule" id="MF_00366"/>
    </source>
</evidence>
<accession>P66725</accession>
<accession>Q99UQ8</accession>
<feature type="chain" id="PRO_0000128978" description="DNA-directed RNA polymerase subunit omega">
    <location>
        <begin position="1"/>
        <end position="72"/>
    </location>
</feature>
<sequence>MLNPPLNQLTSQIKSKYLIATTAAKRAREIDEQPETELLSEYHSFKPVGRALEEIADGKIRPVISSDYYGKE</sequence>
<reference key="1">
    <citation type="journal article" date="2001" name="Lancet">
        <title>Whole genome sequencing of meticillin-resistant Staphylococcus aureus.</title>
        <authorList>
            <person name="Kuroda M."/>
            <person name="Ohta T."/>
            <person name="Uchiyama I."/>
            <person name="Baba T."/>
            <person name="Yuzawa H."/>
            <person name="Kobayashi I."/>
            <person name="Cui L."/>
            <person name="Oguchi A."/>
            <person name="Aoki K."/>
            <person name="Nagai Y."/>
            <person name="Lian J.-Q."/>
            <person name="Ito T."/>
            <person name="Kanamori M."/>
            <person name="Matsumaru H."/>
            <person name="Maruyama A."/>
            <person name="Murakami H."/>
            <person name="Hosoyama A."/>
            <person name="Mizutani-Ui Y."/>
            <person name="Takahashi N.K."/>
            <person name="Sawano T."/>
            <person name="Inoue R."/>
            <person name="Kaito C."/>
            <person name="Sekimizu K."/>
            <person name="Hirakawa H."/>
            <person name="Kuhara S."/>
            <person name="Goto S."/>
            <person name="Yabuzaki J."/>
            <person name="Kanehisa M."/>
            <person name="Yamashita A."/>
            <person name="Oshima K."/>
            <person name="Furuya K."/>
            <person name="Yoshino C."/>
            <person name="Shiba T."/>
            <person name="Hattori M."/>
            <person name="Ogasawara N."/>
            <person name="Hayashi H."/>
            <person name="Hiramatsu K."/>
        </authorList>
    </citation>
    <scope>NUCLEOTIDE SEQUENCE [LARGE SCALE GENOMIC DNA]</scope>
    <source>
        <strain>Mu50 / ATCC 700699</strain>
    </source>
</reference>
<dbReference type="EC" id="2.7.7.6" evidence="1"/>
<dbReference type="EMBL" id="BA000017">
    <property type="protein sequence ID" value="BAB57372.1"/>
    <property type="molecule type" value="Genomic_DNA"/>
</dbReference>
<dbReference type="RefSeq" id="WP_000933956.1">
    <property type="nucleotide sequence ID" value="NC_002758.2"/>
</dbReference>
<dbReference type="SMR" id="P66725"/>
<dbReference type="KEGG" id="sav:SAV1210"/>
<dbReference type="HOGENOM" id="CLU_125406_6_0_9"/>
<dbReference type="PhylomeDB" id="P66725"/>
<dbReference type="Proteomes" id="UP000002481">
    <property type="component" value="Chromosome"/>
</dbReference>
<dbReference type="GO" id="GO:0000428">
    <property type="term" value="C:DNA-directed RNA polymerase complex"/>
    <property type="evidence" value="ECO:0007669"/>
    <property type="project" value="UniProtKB-KW"/>
</dbReference>
<dbReference type="GO" id="GO:0003677">
    <property type="term" value="F:DNA binding"/>
    <property type="evidence" value="ECO:0007669"/>
    <property type="project" value="UniProtKB-UniRule"/>
</dbReference>
<dbReference type="GO" id="GO:0003899">
    <property type="term" value="F:DNA-directed RNA polymerase activity"/>
    <property type="evidence" value="ECO:0007669"/>
    <property type="project" value="UniProtKB-UniRule"/>
</dbReference>
<dbReference type="GO" id="GO:0006351">
    <property type="term" value="P:DNA-templated transcription"/>
    <property type="evidence" value="ECO:0007669"/>
    <property type="project" value="UniProtKB-UniRule"/>
</dbReference>
<dbReference type="Gene3D" id="3.90.940.10">
    <property type="match status" value="1"/>
</dbReference>
<dbReference type="HAMAP" id="MF_00366">
    <property type="entry name" value="RNApol_bact_RpoZ"/>
    <property type="match status" value="1"/>
</dbReference>
<dbReference type="InterPro" id="IPR003716">
    <property type="entry name" value="DNA-dir_RNA_pol_omega"/>
</dbReference>
<dbReference type="InterPro" id="IPR006110">
    <property type="entry name" value="Pol_omega/Rpo6/RPB6"/>
</dbReference>
<dbReference type="InterPro" id="IPR036161">
    <property type="entry name" value="RPB6/omega-like_sf"/>
</dbReference>
<dbReference type="NCBIfam" id="TIGR00690">
    <property type="entry name" value="rpoZ"/>
    <property type="match status" value="1"/>
</dbReference>
<dbReference type="PANTHER" id="PTHR34476">
    <property type="entry name" value="DNA-DIRECTED RNA POLYMERASE SUBUNIT OMEGA"/>
    <property type="match status" value="1"/>
</dbReference>
<dbReference type="PANTHER" id="PTHR34476:SF1">
    <property type="entry name" value="DNA-DIRECTED RNA POLYMERASE SUBUNIT OMEGA"/>
    <property type="match status" value="1"/>
</dbReference>
<dbReference type="Pfam" id="PF01192">
    <property type="entry name" value="RNA_pol_Rpb6"/>
    <property type="match status" value="1"/>
</dbReference>
<dbReference type="SMART" id="SM01409">
    <property type="entry name" value="RNA_pol_Rpb6"/>
    <property type="match status" value="1"/>
</dbReference>
<dbReference type="SUPFAM" id="SSF63562">
    <property type="entry name" value="RPB6/omega subunit-like"/>
    <property type="match status" value="1"/>
</dbReference>
<proteinExistence type="inferred from homology"/>
<keyword id="KW-0240">DNA-directed RNA polymerase</keyword>
<keyword id="KW-0548">Nucleotidyltransferase</keyword>
<keyword id="KW-0804">Transcription</keyword>
<keyword id="KW-0808">Transferase</keyword>
<name>RPOZ_STAAM</name>
<organism>
    <name type="scientific">Staphylococcus aureus (strain Mu50 / ATCC 700699)</name>
    <dbReference type="NCBI Taxonomy" id="158878"/>
    <lineage>
        <taxon>Bacteria</taxon>
        <taxon>Bacillati</taxon>
        <taxon>Bacillota</taxon>
        <taxon>Bacilli</taxon>
        <taxon>Bacillales</taxon>
        <taxon>Staphylococcaceae</taxon>
        <taxon>Staphylococcus</taxon>
    </lineage>
</organism>
<protein>
    <recommendedName>
        <fullName evidence="1">DNA-directed RNA polymerase subunit omega</fullName>
        <shortName evidence="1">RNAP omega subunit</shortName>
        <ecNumber evidence="1">2.7.7.6</ecNumber>
    </recommendedName>
    <alternativeName>
        <fullName evidence="1">RNA polymerase omega subunit</fullName>
    </alternativeName>
    <alternativeName>
        <fullName evidence="1">Transcriptase subunit omega</fullName>
    </alternativeName>
</protein>